<organism>
    <name type="scientific">Mus musculus</name>
    <name type="common">Mouse</name>
    <dbReference type="NCBI Taxonomy" id="10090"/>
    <lineage>
        <taxon>Eukaryota</taxon>
        <taxon>Metazoa</taxon>
        <taxon>Chordata</taxon>
        <taxon>Craniata</taxon>
        <taxon>Vertebrata</taxon>
        <taxon>Euteleostomi</taxon>
        <taxon>Mammalia</taxon>
        <taxon>Eutheria</taxon>
        <taxon>Euarchontoglires</taxon>
        <taxon>Glires</taxon>
        <taxon>Rodentia</taxon>
        <taxon>Myomorpha</taxon>
        <taxon>Muroidea</taxon>
        <taxon>Muridae</taxon>
        <taxon>Murinae</taxon>
        <taxon>Mus</taxon>
        <taxon>Mus</taxon>
    </lineage>
</organism>
<accession>Q8R3U1</accession>
<accession>B7X6T3</accession>
<accession>Q3V3C3</accession>
<accession>Q8BWF7</accession>
<feature type="chain" id="PRO_0000152485" description="Phospholipase A and acyltransferase 3">
    <location>
        <begin position="1"/>
        <end position="162"/>
    </location>
</feature>
<feature type="topological domain" description="Cytoplasmic" evidence="3">
    <location>
        <begin position="1"/>
        <end position="133"/>
    </location>
</feature>
<feature type="transmembrane region" description="Helical" evidence="3">
    <location>
        <begin position="134"/>
        <end position="154"/>
    </location>
</feature>
<feature type="topological domain" description="Lumenal" evidence="3">
    <location>
        <begin position="155"/>
        <end position="162"/>
    </location>
</feature>
<feature type="domain" description="LRAT" evidence="4">
    <location>
        <begin position="13"/>
        <end position="129"/>
    </location>
</feature>
<feature type="active site" evidence="4 16">
    <location>
        <position position="23"/>
    </location>
</feature>
<feature type="active site" evidence="4">
    <location>
        <position position="35"/>
    </location>
</feature>
<feature type="active site" description="Acyl-thioester intermediate" evidence="4 16 17">
    <location>
        <position position="113"/>
    </location>
</feature>
<feature type="splice variant" id="VSP_013542" description="In isoform 2." evidence="13">
    <original>RDAVKAVGIAGVGLAALGLVGVMLSRNKKQKQ</original>
    <variation>CHRPCTLTLGVRSFSQLPVAGPECGWRQNYKQDDNSLM</variation>
    <location>
        <begin position="131"/>
        <end position="162"/>
    </location>
</feature>
<feature type="mutagenesis site" description="Abolishes enzyme activity." evidence="6 9">
    <original>H</original>
    <variation>A</variation>
    <variation>Q</variation>
    <location>
        <position position="23"/>
    </location>
</feature>
<feature type="mutagenesis site" description="Abolishes enzyme activity." evidence="6">
    <original>N</original>
    <variation>A</variation>
    <variation>Q</variation>
    <location>
        <position position="112"/>
    </location>
</feature>
<feature type="mutagenesis site" description="Abolishes enzyme activity." evidence="6">
    <original>C</original>
    <variation>A</variation>
    <location>
        <position position="113"/>
    </location>
</feature>
<feature type="mutagenesis site" description="Loss of phospholipase activity and loss of organelle membrane rupture." evidence="6 11">
    <original>C</original>
    <variation>S</variation>
    <location>
        <position position="113"/>
    </location>
</feature>
<feature type="mutagenesis site" description="Abolishes enzyme activity." evidence="6">
    <original>Q</original>
    <variation>A</variation>
    <location>
        <position position="129"/>
    </location>
</feature>
<feature type="sequence conflict" description="In Ref. 4; AAH24581." evidence="15" ref="4">
    <original>I</original>
    <variation>V</variation>
    <location>
        <position position="42"/>
    </location>
</feature>
<protein>
    <recommendedName>
        <fullName evidence="1">Phospholipase A and acyltransferase 3</fullName>
        <ecNumber evidence="7">2.3.1.-</ecNumber>
        <ecNumber evidence="6 7 8 9">3.1.1.32</ecNumber>
        <ecNumber evidence="6 7 8 9">3.1.1.4</ecNumber>
    </recommendedName>
    <alternativeName>
        <fullName evidence="18">Adipose-specific phospholipase A2</fullName>
        <shortName evidence="14">AdPLA</shortName>
    </alternativeName>
    <alternativeName>
        <fullName evidence="18">Group XVI phospholipase A2</fullName>
    </alternativeName>
    <alternativeName>
        <fullName evidence="1">H-rev 107 protein homolog</fullName>
    </alternativeName>
    <alternativeName>
        <fullName evidence="1">HRAS-like suppressor 3</fullName>
        <shortName evidence="1">HRSL3</shortName>
    </alternativeName>
</protein>
<evidence type="ECO:0000250" key="1">
    <source>
        <dbReference type="UniProtKB" id="P53816"/>
    </source>
</evidence>
<evidence type="ECO:0000250" key="2">
    <source>
        <dbReference type="UniProtKB" id="P53817"/>
    </source>
</evidence>
<evidence type="ECO:0000255" key="3"/>
<evidence type="ECO:0000255" key="4">
    <source>
        <dbReference type="PROSITE-ProRule" id="PRU01283"/>
    </source>
</evidence>
<evidence type="ECO:0000269" key="5">
    <source>
    </source>
</evidence>
<evidence type="ECO:0000269" key="6">
    <source>
    </source>
</evidence>
<evidence type="ECO:0000269" key="7">
    <source>
    </source>
</evidence>
<evidence type="ECO:0000269" key="8">
    <source>
    </source>
</evidence>
<evidence type="ECO:0000269" key="9">
    <source>
    </source>
</evidence>
<evidence type="ECO:0000269" key="10">
    <source>
    </source>
</evidence>
<evidence type="ECO:0000269" key="11">
    <source>
    </source>
</evidence>
<evidence type="ECO:0000269" key="12">
    <source>
    </source>
</evidence>
<evidence type="ECO:0000303" key="13">
    <source>
    </source>
</evidence>
<evidence type="ECO:0000303" key="14">
    <source>
    </source>
</evidence>
<evidence type="ECO:0000305" key="15"/>
<evidence type="ECO:0000305" key="16">
    <source>
    </source>
</evidence>
<evidence type="ECO:0000305" key="17">
    <source>
    </source>
</evidence>
<evidence type="ECO:0000312" key="18">
    <source>
        <dbReference type="MGI" id="MGI:2179715"/>
    </source>
</evidence>
<name>PLAT3_MOUSE</name>
<gene>
    <name evidence="1" type="primary">Plaat3</name>
    <name evidence="1" type="synonym">H-rev107</name>
    <name evidence="1" type="synonym">Hrasls3</name>
    <name evidence="1" type="synonym">Hrev107</name>
    <name evidence="18" type="synonym">Pla2g16</name>
</gene>
<sequence length="162" mass="17872">MLAPIPEPKPGDLIEIFRPMYRHWAIYVGDGYVIHLAPPSEIAGAGAASIMSALTDKAIVKKELLCHVAGKDKYQVNNKHDEEYTPLPLSKIIQRAERLVGQEVLYRLTSENCEHFVNELRYGVPRSDQVRDAVKAVGIAGVGLAALGLVGVMLSRNKKQKQ</sequence>
<dbReference type="EC" id="2.3.1.-" evidence="7"/>
<dbReference type="EC" id="3.1.1.32" evidence="6 7 8 9"/>
<dbReference type="EC" id="3.1.1.4" evidence="6 7 8 9"/>
<dbReference type="EMBL" id="AB298806">
    <property type="protein sequence ID" value="BAH08635.1"/>
    <property type="molecule type" value="mRNA"/>
</dbReference>
<dbReference type="EMBL" id="AK039703">
    <property type="protein sequence ID" value="BAE20550.1"/>
    <property type="molecule type" value="mRNA"/>
</dbReference>
<dbReference type="EMBL" id="AK042007">
    <property type="protein sequence ID" value="BAE20615.1"/>
    <property type="molecule type" value="mRNA"/>
</dbReference>
<dbReference type="EMBL" id="AK052657">
    <property type="protein sequence ID" value="BAC35085.1"/>
    <property type="molecule type" value="mRNA"/>
</dbReference>
<dbReference type="EMBL" id="AK163505">
    <property type="protein sequence ID" value="BAE37375.1"/>
    <property type="molecule type" value="mRNA"/>
</dbReference>
<dbReference type="EMBL" id="CH466612">
    <property type="protein sequence ID" value="EDL33312.1"/>
    <property type="molecule type" value="Genomic_DNA"/>
</dbReference>
<dbReference type="EMBL" id="CH466612">
    <property type="protein sequence ID" value="EDL33314.1"/>
    <property type="molecule type" value="Genomic_DNA"/>
</dbReference>
<dbReference type="EMBL" id="BC024581">
    <property type="protein sequence ID" value="AAH24581.1"/>
    <property type="molecule type" value="mRNA"/>
</dbReference>
<dbReference type="CCDS" id="CCDS29528.1">
    <molecule id="Q8R3U1-1"/>
</dbReference>
<dbReference type="RefSeq" id="NP_001349354.1">
    <molecule id="Q8R3U1-1"/>
    <property type="nucleotide sequence ID" value="NM_001362425.1"/>
</dbReference>
<dbReference type="RefSeq" id="NP_644675.2">
    <molecule id="Q8R3U1-1"/>
    <property type="nucleotide sequence ID" value="NM_139269.2"/>
</dbReference>
<dbReference type="RefSeq" id="XP_006526984.1">
    <property type="nucleotide sequence ID" value="XM_006526921.2"/>
</dbReference>
<dbReference type="SMR" id="Q8R3U1"/>
<dbReference type="FunCoup" id="Q8R3U1">
    <property type="interactions" value="743"/>
</dbReference>
<dbReference type="STRING" id="10090.ENSMUSP00000025925"/>
<dbReference type="SwissLipids" id="SLP:000001902"/>
<dbReference type="iPTMnet" id="Q8R3U1"/>
<dbReference type="PhosphoSitePlus" id="Q8R3U1"/>
<dbReference type="PaxDb" id="10090-ENSMUSP00000025925"/>
<dbReference type="PeptideAtlas" id="Q8R3U1"/>
<dbReference type="ProteomicsDB" id="287758">
    <molecule id="Q8R3U1-1"/>
</dbReference>
<dbReference type="ProteomicsDB" id="287759">
    <molecule id="Q8R3U1-2"/>
</dbReference>
<dbReference type="Pumba" id="Q8R3U1"/>
<dbReference type="Antibodypedia" id="28982">
    <property type="antibodies" value="342 antibodies from 25 providers"/>
</dbReference>
<dbReference type="DNASU" id="225845"/>
<dbReference type="Ensembl" id="ENSMUST00000025925.11">
    <molecule id="Q8R3U1-1"/>
    <property type="protein sequence ID" value="ENSMUSP00000025925.5"/>
    <property type="gene ID" value="ENSMUSG00000060675.14"/>
</dbReference>
<dbReference type="Ensembl" id="ENSMUST00000136465.8">
    <molecule id="Q8R3U1-2"/>
    <property type="protein sequence ID" value="ENSMUSP00000119403.2"/>
    <property type="gene ID" value="ENSMUSG00000060675.14"/>
</dbReference>
<dbReference type="Ensembl" id="ENSMUST00000136756.2">
    <molecule id="Q8R3U1-1"/>
    <property type="protein sequence ID" value="ENSMUSP00000115151.2"/>
    <property type="gene ID" value="ENSMUSG00000060675.14"/>
</dbReference>
<dbReference type="GeneID" id="225845"/>
<dbReference type="KEGG" id="mmu:225845"/>
<dbReference type="UCSC" id="uc008glh.1">
    <molecule id="Q8R3U1-2"/>
    <property type="organism name" value="mouse"/>
</dbReference>
<dbReference type="UCSC" id="uc008gli.1">
    <molecule id="Q8R3U1-1"/>
    <property type="organism name" value="mouse"/>
</dbReference>
<dbReference type="AGR" id="MGI:2179715"/>
<dbReference type="CTD" id="11145"/>
<dbReference type="MGI" id="MGI:2179715">
    <property type="gene designation" value="Plaat3"/>
</dbReference>
<dbReference type="VEuPathDB" id="HostDB:ENSMUSG00000060675"/>
<dbReference type="eggNOG" id="ENOG502S0JN">
    <property type="taxonomic scope" value="Eukaryota"/>
</dbReference>
<dbReference type="GeneTree" id="ENSGT00940000154853"/>
<dbReference type="HOGENOM" id="CLU_109418_0_1_1"/>
<dbReference type="InParanoid" id="Q8R3U1"/>
<dbReference type="OMA" id="PYCIFRG"/>
<dbReference type="PhylomeDB" id="Q8R3U1"/>
<dbReference type="TreeFam" id="TF330836"/>
<dbReference type="Reactome" id="R-MMU-1482788">
    <property type="pathway name" value="Acyl chain remodelling of PC"/>
</dbReference>
<dbReference type="Reactome" id="R-MMU-1482801">
    <property type="pathway name" value="Acyl chain remodelling of PS"/>
</dbReference>
<dbReference type="Reactome" id="R-MMU-1482839">
    <property type="pathway name" value="Acyl chain remodelling of PE"/>
</dbReference>
<dbReference type="Reactome" id="R-MMU-1482922">
    <property type="pathway name" value="Acyl chain remodelling of PI"/>
</dbReference>
<dbReference type="BioGRID-ORCS" id="225845">
    <property type="hits" value="3 hits in 78 CRISPR screens"/>
</dbReference>
<dbReference type="ChiTaRS" id="Plaat3">
    <property type="organism name" value="mouse"/>
</dbReference>
<dbReference type="PRO" id="PR:Q8R3U1"/>
<dbReference type="Proteomes" id="UP000000589">
    <property type="component" value="Chromosome 19"/>
</dbReference>
<dbReference type="RNAct" id="Q8R3U1">
    <property type="molecule type" value="protein"/>
</dbReference>
<dbReference type="Bgee" id="ENSMUSG00000060675">
    <property type="expression patterns" value="Expressed in white adipose tissue and 240 other cell types or tissues"/>
</dbReference>
<dbReference type="ExpressionAtlas" id="Q8R3U1">
    <property type="expression patterns" value="baseline and differential"/>
</dbReference>
<dbReference type="GO" id="GO:0005829">
    <property type="term" value="C:cytosol"/>
    <property type="evidence" value="ECO:0000314"/>
    <property type="project" value="UniProtKB"/>
</dbReference>
<dbReference type="GO" id="GO:0005783">
    <property type="term" value="C:endoplasmic reticulum"/>
    <property type="evidence" value="ECO:0000314"/>
    <property type="project" value="UniProtKB"/>
</dbReference>
<dbReference type="GO" id="GO:0005789">
    <property type="term" value="C:endoplasmic reticulum membrane"/>
    <property type="evidence" value="ECO:0007669"/>
    <property type="project" value="UniProtKB-SubCell"/>
</dbReference>
<dbReference type="GO" id="GO:0005765">
    <property type="term" value="C:lysosomal membrane"/>
    <property type="evidence" value="ECO:0007669"/>
    <property type="project" value="UniProtKB-SubCell"/>
</dbReference>
<dbReference type="GO" id="GO:0005764">
    <property type="term" value="C:lysosome"/>
    <property type="evidence" value="ECO:0000314"/>
    <property type="project" value="UniProtKB"/>
</dbReference>
<dbReference type="GO" id="GO:0031966">
    <property type="term" value="C:mitochondrial membrane"/>
    <property type="evidence" value="ECO:0007669"/>
    <property type="project" value="UniProtKB-SubCell"/>
</dbReference>
<dbReference type="GO" id="GO:0005739">
    <property type="term" value="C:mitochondrion"/>
    <property type="evidence" value="ECO:0000314"/>
    <property type="project" value="UniProtKB"/>
</dbReference>
<dbReference type="GO" id="GO:0005635">
    <property type="term" value="C:nuclear envelope"/>
    <property type="evidence" value="ECO:0000314"/>
    <property type="project" value="UniProtKB"/>
</dbReference>
<dbReference type="GO" id="GO:0048471">
    <property type="term" value="C:perinuclear region of cytoplasm"/>
    <property type="evidence" value="ECO:0000314"/>
    <property type="project" value="UniProtKB"/>
</dbReference>
<dbReference type="GO" id="GO:0005778">
    <property type="term" value="C:peroxisomal membrane"/>
    <property type="evidence" value="ECO:0007669"/>
    <property type="project" value="UniProtKB-SubCell"/>
</dbReference>
<dbReference type="GO" id="GO:0005777">
    <property type="term" value="C:peroxisome"/>
    <property type="evidence" value="ECO:0000314"/>
    <property type="project" value="UniProtKB"/>
</dbReference>
<dbReference type="GO" id="GO:0005886">
    <property type="term" value="C:plasma membrane"/>
    <property type="evidence" value="ECO:0007669"/>
    <property type="project" value="UniProtKB-SubCell"/>
</dbReference>
<dbReference type="GO" id="GO:0016410">
    <property type="term" value="F:N-acyltransferase activity"/>
    <property type="evidence" value="ECO:0000250"/>
    <property type="project" value="UniProtKB"/>
</dbReference>
<dbReference type="GO" id="GO:0008970">
    <property type="term" value="F:phospholipase A1 activity"/>
    <property type="evidence" value="ECO:0000314"/>
    <property type="project" value="UniProtKB"/>
</dbReference>
<dbReference type="GO" id="GO:0004623">
    <property type="term" value="F:phospholipase A2 activity"/>
    <property type="evidence" value="ECO:0000314"/>
    <property type="project" value="UniProtKB"/>
</dbReference>
<dbReference type="GO" id="GO:0004620">
    <property type="term" value="F:phospholipase activity"/>
    <property type="evidence" value="ECO:0000314"/>
    <property type="project" value="UniProtKB"/>
</dbReference>
<dbReference type="GO" id="GO:0046485">
    <property type="term" value="P:ether lipid metabolic process"/>
    <property type="evidence" value="ECO:0000315"/>
    <property type="project" value="UniProtKB"/>
</dbReference>
<dbReference type="GO" id="GO:0070306">
    <property type="term" value="P:lens fiber cell differentiation"/>
    <property type="evidence" value="ECO:0000315"/>
    <property type="project" value="UniProtKB"/>
</dbReference>
<dbReference type="GO" id="GO:0016042">
    <property type="term" value="P:lipid catabolic process"/>
    <property type="evidence" value="ECO:0000315"/>
    <property type="project" value="UniProtKB"/>
</dbReference>
<dbReference type="GO" id="GO:0030397">
    <property type="term" value="P:membrane disassembly"/>
    <property type="evidence" value="ECO:0000314"/>
    <property type="project" value="UniProtKB"/>
</dbReference>
<dbReference type="GO" id="GO:0070292">
    <property type="term" value="P:N-acylphosphatidylethanolamine metabolic process"/>
    <property type="evidence" value="ECO:0000250"/>
    <property type="project" value="UniProtKB"/>
</dbReference>
<dbReference type="GO" id="GO:1903008">
    <property type="term" value="P:organelle disassembly"/>
    <property type="evidence" value="ECO:0000315"/>
    <property type="project" value="UniProtKB"/>
</dbReference>
<dbReference type="GO" id="GO:0007031">
    <property type="term" value="P:peroxisome organization"/>
    <property type="evidence" value="ECO:0000315"/>
    <property type="project" value="UniProtKB"/>
</dbReference>
<dbReference type="GO" id="GO:0008654">
    <property type="term" value="P:phospholipid biosynthetic process"/>
    <property type="evidence" value="ECO:0000314"/>
    <property type="project" value="UniProtKB"/>
</dbReference>
<dbReference type="GO" id="GO:0006644">
    <property type="term" value="P:phospholipid metabolic process"/>
    <property type="evidence" value="ECO:0000315"/>
    <property type="project" value="UniProtKB"/>
</dbReference>
<dbReference type="GO" id="GO:1904177">
    <property type="term" value="P:regulation of adipose tissue development"/>
    <property type="evidence" value="ECO:0000315"/>
    <property type="project" value="UniProtKB"/>
</dbReference>
<dbReference type="GO" id="GO:0009617">
    <property type="term" value="P:response to bacterium"/>
    <property type="evidence" value="ECO:0000270"/>
    <property type="project" value="MGI"/>
</dbReference>
<dbReference type="GO" id="GO:0006641">
    <property type="term" value="P:triglyceride metabolic process"/>
    <property type="evidence" value="ECO:0000315"/>
    <property type="project" value="UniProtKB"/>
</dbReference>
<dbReference type="FunFam" id="3.90.1720.10:FF:000002">
    <property type="entry name" value="HRAS like suppressor 2"/>
    <property type="match status" value="1"/>
</dbReference>
<dbReference type="Gene3D" id="3.90.1720.10">
    <property type="entry name" value="endopeptidase domain like (from Nostoc punctiforme)"/>
    <property type="match status" value="1"/>
</dbReference>
<dbReference type="InterPro" id="IPR051496">
    <property type="entry name" value="H-rev107_PLA/AT"/>
</dbReference>
<dbReference type="InterPro" id="IPR007053">
    <property type="entry name" value="LRAT_dom"/>
</dbReference>
<dbReference type="PANTHER" id="PTHR13943">
    <property type="entry name" value="HRAS-LIKE SUPPRESSOR - RELATED"/>
    <property type="match status" value="1"/>
</dbReference>
<dbReference type="PANTHER" id="PTHR13943:SF31">
    <property type="entry name" value="PHOSPHOLIPASE A AND ACYLTRANSFERASE 3"/>
    <property type="match status" value="1"/>
</dbReference>
<dbReference type="Pfam" id="PF04970">
    <property type="entry name" value="LRAT"/>
    <property type="match status" value="1"/>
</dbReference>
<dbReference type="PROSITE" id="PS51934">
    <property type="entry name" value="LRAT"/>
    <property type="match status" value="1"/>
</dbReference>
<keyword id="KW-0025">Alternative splicing</keyword>
<keyword id="KW-1003">Cell membrane</keyword>
<keyword id="KW-0963">Cytoplasm</keyword>
<keyword id="KW-0256">Endoplasmic reticulum</keyword>
<keyword id="KW-0378">Hydrolase</keyword>
<keyword id="KW-0442">Lipid degradation</keyword>
<keyword id="KW-0443">Lipid metabolism</keyword>
<keyword id="KW-0458">Lysosome</keyword>
<keyword id="KW-0472">Membrane</keyword>
<keyword id="KW-0496">Mitochondrion</keyword>
<keyword id="KW-0539">Nucleus</keyword>
<keyword id="KW-0576">Peroxisome</keyword>
<keyword id="KW-1185">Reference proteome</keyword>
<keyword id="KW-0808">Transferase</keyword>
<keyword id="KW-0812">Transmembrane</keyword>
<keyword id="KW-1133">Transmembrane helix</keyword>
<reference key="1">
    <citation type="submission" date="2007-03" db="EMBL/GenBank/DDBJ databases">
        <title>Purification and characterization of LRAT-like protein 3.</title>
        <authorList>
            <person name="Morishita J."/>
            <person name="Okamoto Y."/>
            <person name="Jin X.H."/>
            <person name="Tsuboi K."/>
            <person name="Ueda N."/>
        </authorList>
    </citation>
    <scope>NUCLEOTIDE SEQUENCE [MRNA] (ISOFORM 1)</scope>
</reference>
<reference key="2">
    <citation type="journal article" date="2005" name="Science">
        <title>The transcriptional landscape of the mammalian genome.</title>
        <authorList>
            <person name="Carninci P."/>
            <person name="Kasukawa T."/>
            <person name="Katayama S."/>
            <person name="Gough J."/>
            <person name="Frith M.C."/>
            <person name="Maeda N."/>
            <person name="Oyama R."/>
            <person name="Ravasi T."/>
            <person name="Lenhard B."/>
            <person name="Wells C."/>
            <person name="Kodzius R."/>
            <person name="Shimokawa K."/>
            <person name="Bajic V.B."/>
            <person name="Brenner S.E."/>
            <person name="Batalov S."/>
            <person name="Forrest A.R."/>
            <person name="Zavolan M."/>
            <person name="Davis M.J."/>
            <person name="Wilming L.G."/>
            <person name="Aidinis V."/>
            <person name="Allen J.E."/>
            <person name="Ambesi-Impiombato A."/>
            <person name="Apweiler R."/>
            <person name="Aturaliya R.N."/>
            <person name="Bailey T.L."/>
            <person name="Bansal M."/>
            <person name="Baxter L."/>
            <person name="Beisel K.W."/>
            <person name="Bersano T."/>
            <person name="Bono H."/>
            <person name="Chalk A.M."/>
            <person name="Chiu K.P."/>
            <person name="Choudhary V."/>
            <person name="Christoffels A."/>
            <person name="Clutterbuck D.R."/>
            <person name="Crowe M.L."/>
            <person name="Dalla E."/>
            <person name="Dalrymple B.P."/>
            <person name="de Bono B."/>
            <person name="Della Gatta G."/>
            <person name="di Bernardo D."/>
            <person name="Down T."/>
            <person name="Engstrom P."/>
            <person name="Fagiolini M."/>
            <person name="Faulkner G."/>
            <person name="Fletcher C.F."/>
            <person name="Fukushima T."/>
            <person name="Furuno M."/>
            <person name="Futaki S."/>
            <person name="Gariboldi M."/>
            <person name="Georgii-Hemming P."/>
            <person name="Gingeras T.R."/>
            <person name="Gojobori T."/>
            <person name="Green R.E."/>
            <person name="Gustincich S."/>
            <person name="Harbers M."/>
            <person name="Hayashi Y."/>
            <person name="Hensch T.K."/>
            <person name="Hirokawa N."/>
            <person name="Hill D."/>
            <person name="Huminiecki L."/>
            <person name="Iacono M."/>
            <person name="Ikeo K."/>
            <person name="Iwama A."/>
            <person name="Ishikawa T."/>
            <person name="Jakt M."/>
            <person name="Kanapin A."/>
            <person name="Katoh M."/>
            <person name="Kawasawa Y."/>
            <person name="Kelso J."/>
            <person name="Kitamura H."/>
            <person name="Kitano H."/>
            <person name="Kollias G."/>
            <person name="Krishnan S.P."/>
            <person name="Kruger A."/>
            <person name="Kummerfeld S.K."/>
            <person name="Kurochkin I.V."/>
            <person name="Lareau L.F."/>
            <person name="Lazarevic D."/>
            <person name="Lipovich L."/>
            <person name="Liu J."/>
            <person name="Liuni S."/>
            <person name="McWilliam S."/>
            <person name="Madan Babu M."/>
            <person name="Madera M."/>
            <person name="Marchionni L."/>
            <person name="Matsuda H."/>
            <person name="Matsuzawa S."/>
            <person name="Miki H."/>
            <person name="Mignone F."/>
            <person name="Miyake S."/>
            <person name="Morris K."/>
            <person name="Mottagui-Tabar S."/>
            <person name="Mulder N."/>
            <person name="Nakano N."/>
            <person name="Nakauchi H."/>
            <person name="Ng P."/>
            <person name="Nilsson R."/>
            <person name="Nishiguchi S."/>
            <person name="Nishikawa S."/>
            <person name="Nori F."/>
            <person name="Ohara O."/>
            <person name="Okazaki Y."/>
            <person name="Orlando V."/>
            <person name="Pang K.C."/>
            <person name="Pavan W.J."/>
            <person name="Pavesi G."/>
            <person name="Pesole G."/>
            <person name="Petrovsky N."/>
            <person name="Piazza S."/>
            <person name="Reed J."/>
            <person name="Reid J.F."/>
            <person name="Ring B.Z."/>
            <person name="Ringwald M."/>
            <person name="Rost B."/>
            <person name="Ruan Y."/>
            <person name="Salzberg S.L."/>
            <person name="Sandelin A."/>
            <person name="Schneider C."/>
            <person name="Schoenbach C."/>
            <person name="Sekiguchi K."/>
            <person name="Semple C.A."/>
            <person name="Seno S."/>
            <person name="Sessa L."/>
            <person name="Sheng Y."/>
            <person name="Shibata Y."/>
            <person name="Shimada H."/>
            <person name="Shimada K."/>
            <person name="Silva D."/>
            <person name="Sinclair B."/>
            <person name="Sperling S."/>
            <person name="Stupka E."/>
            <person name="Sugiura K."/>
            <person name="Sultana R."/>
            <person name="Takenaka Y."/>
            <person name="Taki K."/>
            <person name="Tammoja K."/>
            <person name="Tan S.L."/>
            <person name="Tang S."/>
            <person name="Taylor M.S."/>
            <person name="Tegner J."/>
            <person name="Teichmann S.A."/>
            <person name="Ueda H.R."/>
            <person name="van Nimwegen E."/>
            <person name="Verardo R."/>
            <person name="Wei C.L."/>
            <person name="Yagi K."/>
            <person name="Yamanishi H."/>
            <person name="Zabarovsky E."/>
            <person name="Zhu S."/>
            <person name="Zimmer A."/>
            <person name="Hide W."/>
            <person name="Bult C."/>
            <person name="Grimmond S.M."/>
            <person name="Teasdale R.D."/>
            <person name="Liu E.T."/>
            <person name="Brusic V."/>
            <person name="Quackenbush J."/>
            <person name="Wahlestedt C."/>
            <person name="Mattick J.S."/>
            <person name="Hume D.A."/>
            <person name="Kai C."/>
            <person name="Sasaki D."/>
            <person name="Tomaru Y."/>
            <person name="Fukuda S."/>
            <person name="Kanamori-Katayama M."/>
            <person name="Suzuki M."/>
            <person name="Aoki J."/>
            <person name="Arakawa T."/>
            <person name="Iida J."/>
            <person name="Imamura K."/>
            <person name="Itoh M."/>
            <person name="Kato T."/>
            <person name="Kawaji H."/>
            <person name="Kawagashira N."/>
            <person name="Kawashima T."/>
            <person name="Kojima M."/>
            <person name="Kondo S."/>
            <person name="Konno H."/>
            <person name="Nakano K."/>
            <person name="Ninomiya N."/>
            <person name="Nishio T."/>
            <person name="Okada M."/>
            <person name="Plessy C."/>
            <person name="Shibata K."/>
            <person name="Shiraki T."/>
            <person name="Suzuki S."/>
            <person name="Tagami M."/>
            <person name="Waki K."/>
            <person name="Watahiki A."/>
            <person name="Okamura-Oho Y."/>
            <person name="Suzuki H."/>
            <person name="Kawai J."/>
            <person name="Hayashizaki Y."/>
        </authorList>
    </citation>
    <scope>NUCLEOTIDE SEQUENCE [LARGE SCALE MRNA] (ISOFORMS 1 AND 2)</scope>
    <source>
        <strain>C57BL/6J</strain>
        <tissue>Corpora quadrigemina</tissue>
        <tissue>Kidney</tissue>
        <tissue>Spinal cord</tissue>
        <tissue>Thymus</tissue>
    </source>
</reference>
<reference key="3">
    <citation type="submission" date="2005-07" db="EMBL/GenBank/DDBJ databases">
        <authorList>
            <person name="Mural R.J."/>
            <person name="Adams M.D."/>
            <person name="Myers E.W."/>
            <person name="Smith H.O."/>
            <person name="Venter J.C."/>
        </authorList>
    </citation>
    <scope>NUCLEOTIDE SEQUENCE [LARGE SCALE GENOMIC DNA]</scope>
</reference>
<reference key="4">
    <citation type="journal article" date="2004" name="Genome Res.">
        <title>The status, quality, and expansion of the NIH full-length cDNA project: the Mammalian Gene Collection (MGC).</title>
        <authorList>
            <consortium name="The MGC Project Team"/>
        </authorList>
    </citation>
    <scope>NUCLEOTIDE SEQUENCE [LARGE SCALE MRNA] (ISOFORM 1)</scope>
    <source>
        <strain>Czech II</strain>
        <tissue>Mammary tumor</tissue>
    </source>
</reference>
<reference key="5">
    <citation type="journal article" date="2002" name="J. Biol. Chem.">
        <title>Silencing of the mouse H-rev107 gene encoding a class II tumor suppressor by CpG methylation.</title>
        <authorList>
            <person name="Roder K."/>
            <person name="Latasa M.-J."/>
            <person name="Sul H.S."/>
        </authorList>
    </citation>
    <scope>TISSUE SPECIFICITY</scope>
</reference>
<reference key="6">
    <citation type="journal article" date="2008" name="J. Biol. Chem.">
        <title>Identification and functional characterization of adipose-specific phospholipase A2 (AdPLA).</title>
        <authorList>
            <person name="Duncan R.E."/>
            <person name="Sarkadi-Nagy E."/>
            <person name="Jaworski K."/>
            <person name="Ahmadian M."/>
            <person name="Sul H.S."/>
        </authorList>
    </citation>
    <scope>FUNCTION</scope>
    <scope>CATALYTIC ACTIVITY</scope>
    <scope>BIOPHYSICOCHEMICAL PROPERTIES</scope>
    <scope>SUBCELLULAR LOCATION</scope>
    <scope>TISSUE SPECIFICITY</scope>
    <scope>MUTAGENESIS OF HIS-23; ASN-112; CYS-113 AND GLN-129</scope>
</reference>
<reference key="7">
    <citation type="journal article" date="2009" name="J. Lipid Res.">
        <title>The tumor suppressor gene H-Rev107 functions as a novel Ca2+-independent cytosolic phospholipase A1/2 of the thiol hydrolase type.</title>
        <authorList>
            <person name="Uyama T."/>
            <person name="Morishita J."/>
            <person name="Jin X.H."/>
            <person name="Okamoto Y."/>
            <person name="Tsuboi K."/>
            <person name="Ueda N."/>
        </authorList>
    </citation>
    <scope>FUNCTION</scope>
    <scope>CATALYTIC ACTIVITY</scope>
</reference>
<reference key="8">
    <citation type="journal article" date="2009" name="Nat. Med.">
        <title>AdPLA ablation increases lipolysis and prevents obesity induced by high-fat feeding or leptin deficiency.</title>
        <authorList>
            <person name="Jaworski K."/>
            <person name="Ahmadian M."/>
            <person name="Duncan R.E."/>
            <person name="Sarkadi-Nagy E."/>
            <person name="Varady K.A."/>
            <person name="Hellerstein M.K."/>
            <person name="Lee H.Y."/>
            <person name="Samuel V.T."/>
            <person name="Shulman G.I."/>
            <person name="Kim K.H."/>
            <person name="de Val S."/>
            <person name="Kang C."/>
            <person name="Sul H.S."/>
        </authorList>
    </citation>
    <scope>FUNCTION</scope>
    <scope>CATALYTIC ACTIVITY</scope>
    <scope>TISSUE SPECIFICITY</scope>
    <scope>DISRUPTION PHENOTYPE</scope>
</reference>
<reference key="9">
    <citation type="journal article" date="2010" name="Cell">
        <title>A tissue-specific atlas of mouse protein phosphorylation and expression.</title>
        <authorList>
            <person name="Huttlin E.L."/>
            <person name="Jedrychowski M.P."/>
            <person name="Elias J.E."/>
            <person name="Goswami T."/>
            <person name="Rad R."/>
            <person name="Beausoleil S.A."/>
            <person name="Villen J."/>
            <person name="Haas W."/>
            <person name="Sowa M.E."/>
            <person name="Gygi S.P."/>
        </authorList>
    </citation>
    <scope>IDENTIFICATION BY MASS SPECTROMETRY [LARGE SCALE ANALYSIS]</scope>
    <source>
        <tissue>Brain</tissue>
        <tissue>Brown adipose tissue</tissue>
        <tissue>Heart</tissue>
        <tissue>Liver</tissue>
        <tissue>Pancreas</tissue>
        <tissue>Spleen</tissue>
    </source>
</reference>
<reference key="10">
    <citation type="journal article" date="2012" name="J. Biol. Chem.">
        <title>Regulation of peroxisomal lipid metabolism by catalytic activity of tumor suppressor H-rev107.</title>
        <authorList>
            <person name="Uyama T."/>
            <person name="Ichi I."/>
            <person name="Kono N."/>
            <person name="Inoue A."/>
            <person name="Tsuboi K."/>
            <person name="Jin X.H."/>
            <person name="Araki N."/>
            <person name="Aoki J."/>
            <person name="Arai H."/>
            <person name="Ueda N."/>
        </authorList>
    </citation>
    <scope>FUNCTION</scope>
    <scope>CATALYTIC ACTIVITY</scope>
    <scope>SUBCELLULAR LOCATION</scope>
    <scope>MUTAGENESIS OF CYS-113</scope>
</reference>
<reference key="11">
    <citation type="journal article" date="2017" name="Nature">
        <title>PLA2G16 represents a switch between entry and clearance of Picornaviridae.</title>
        <authorList>
            <person name="Staring J."/>
            <person name="von Castelmur E."/>
            <person name="Blomen V.A."/>
            <person name="van den Hengel L.G."/>
            <person name="Brockmann M."/>
            <person name="Baggen J."/>
            <person name="Thibaut H.J."/>
            <person name="Nieuwenhuis J."/>
            <person name="Janssen H."/>
            <person name="van Kuppeveld F.J."/>
            <person name="Perrakis A."/>
            <person name="Carette J.E."/>
            <person name="Brummelkamp T.R."/>
        </authorList>
    </citation>
    <scope>FUNCTION (MICROBIAL INFECTION)</scope>
    <scope>DISRUPTION PHENOTYPE</scope>
</reference>
<reference key="12">
    <citation type="journal article" date="2021" name="Nature">
        <title>Organelle degradation in the lens by PLAAT phospholipases.</title>
        <authorList>
            <person name="Morishita H."/>
            <person name="Eguchi T."/>
            <person name="Tsukamoto S."/>
            <person name="Sakamaki Y."/>
            <person name="Takahashi S."/>
            <person name="Saito C."/>
            <person name="Koyama-Honda I."/>
            <person name="Mizushima N."/>
        </authorList>
    </citation>
    <scope>FUNCTION</scope>
    <scope>SUBCELLULAR LOCATION</scope>
    <scope>DISRUPTION PHENOTYPE</scope>
    <scope>MUTAGENESIS OF CYS-113</scope>
</reference>
<reference key="13">
    <citation type="journal article" date="2023" name="Nat. Genet.">
        <title>Loss of phospholipase PLAAT3 causes a mixed lipodystrophic and neurological syndrome due to impaired PPARgamma signaling.</title>
        <authorList>
            <consortium name="Program for Undiagnosed Diseases (UD-PrOZA)"/>
            <person name="Schuermans N."/>
            <person name="El Chehadeh S."/>
            <person name="Hemelsoet D."/>
            <person name="Gautheron J."/>
            <person name="Vantyghem M.C."/>
            <person name="Nouioua S."/>
            <person name="Tazir M."/>
            <person name="Vigouroux C."/>
            <person name="Auclair M."/>
            <person name="Bogaert E."/>
            <person name="Dufour S."/>
            <person name="Okawa F."/>
            <person name="Hilbert P."/>
            <person name="Van Doninck N."/>
            <person name="Taquet M.C."/>
            <person name="Rosseel T."/>
            <person name="De Clercq G."/>
            <person name="Debackere E."/>
            <person name="Van Haverbeke C."/>
            <person name="Cherif F.R."/>
            <person name="Urtizberea J.A."/>
            <person name="Chanson J.B."/>
            <person name="Funalot B."/>
            <person name="Authier F.J."/>
            <person name="Kaya S."/>
            <person name="Terryn W."/>
            <person name="Callens S."/>
            <person name="Depypere B."/>
            <person name="Van Dorpe J."/>
            <person name="Poppe B."/>
            <person name="Impens F."/>
            <person name="Mizushima N."/>
            <person name="Depienne C."/>
            <person name="Jeru I."/>
            <person name="Dermaut B."/>
        </authorList>
    </citation>
    <scope>DISRUPTION PHENOTYPE</scope>
    <scope>FUNCTION</scope>
</reference>
<comment type="function">
    <text evidence="1 6 7 8 9 11 12">Exhibits both phospholipase A1/2 and acyltransferase activities (PubMed:19047760, PubMed:37919452). Shows phospholipase A1 (PLA1) and A2 (PLA2), catalyzing the calcium-independent release of fatty acids from the sn-1 or sn-2 position of glycerophospholipids (PubMed:18614531, PubMed:19047760, PubMed:19136964, PubMed:22134920). For most substrates, PLA1 activity is much higher than PLA2 activity (By similarity). Shows O-acyltransferase activity, catalyzing the transfer of a fatty acyl group from glycerophospholipid to the hydroxyl group of lysophospholipid (By similarity). Shows N-acyltransferase activity,catalyzing the calcium-independent transfer of a fatty acyl group at the sn-1 position of phosphatidylcholine (PC) and other glycerophospholipids to the primary amine of phosphatidylethanolamine (PE), forming N-acylphosphatidylethanolamine (NAPE), which serves as precursor for N-acylethanolamines (NAEs) (PubMed:19047760). Exhibits high N-acyltransferase activity and low phospholipase A1/2 activity (By similarity). Required for complete organelle rupture and degradation that occur during eye lens terminal differentiation, when fiber cells that compose the lens degrade all membrane-bound organelles in order to provide lens with transparency to allow the passage of light (PubMed:33854238). Organelle membrane degradation is probably catalyzed by the phospholipase activity (PubMed:33854238).</text>
</comment>
<comment type="function">
    <text evidence="10">(Microbial infection) Acts as a host factor for picornaviruses: required during early infection to promote viral genome release into the cytoplasm (PubMed:28077878).</text>
</comment>
<comment type="catalytic activity">
    <reaction evidence="6 7 8 9">
        <text>a 1,2-diacyl-sn-glycero-3-phosphocholine + H2O = a 1-acyl-sn-glycero-3-phosphocholine + a fatty acid + H(+)</text>
        <dbReference type="Rhea" id="RHEA:15801"/>
        <dbReference type="ChEBI" id="CHEBI:15377"/>
        <dbReference type="ChEBI" id="CHEBI:15378"/>
        <dbReference type="ChEBI" id="CHEBI:28868"/>
        <dbReference type="ChEBI" id="CHEBI:57643"/>
        <dbReference type="ChEBI" id="CHEBI:58168"/>
        <dbReference type="EC" id="3.1.1.4"/>
    </reaction>
    <physiologicalReaction direction="left-to-right" evidence="6">
        <dbReference type="Rhea" id="RHEA:15802"/>
    </physiologicalReaction>
</comment>
<comment type="catalytic activity">
    <reaction evidence="6 7 8">
        <text>a 1,2-diacyl-sn-glycero-3-phosphocholine + H2O = a 2-acyl-sn-glycero-3-phosphocholine + a fatty acid + H(+)</text>
        <dbReference type="Rhea" id="RHEA:18689"/>
        <dbReference type="ChEBI" id="CHEBI:15377"/>
        <dbReference type="ChEBI" id="CHEBI:15378"/>
        <dbReference type="ChEBI" id="CHEBI:28868"/>
        <dbReference type="ChEBI" id="CHEBI:57643"/>
        <dbReference type="ChEBI" id="CHEBI:57875"/>
        <dbReference type="EC" id="3.1.1.32"/>
    </reaction>
    <physiologicalReaction direction="left-to-right" evidence="1">
        <dbReference type="Rhea" id="RHEA:18690"/>
    </physiologicalReaction>
</comment>
<comment type="catalytic activity">
    <reaction evidence="6">
        <text>1,2-dihexadecanoyl-sn-glycero-3-phosphocholine + H2O = 1-hexadecanoyl-sn-glycero-3-phosphocholine + hexadecanoate + H(+)</text>
        <dbReference type="Rhea" id="RHEA:41223"/>
        <dbReference type="ChEBI" id="CHEBI:7896"/>
        <dbReference type="ChEBI" id="CHEBI:15377"/>
        <dbReference type="ChEBI" id="CHEBI:15378"/>
        <dbReference type="ChEBI" id="CHEBI:72998"/>
        <dbReference type="ChEBI" id="CHEBI:72999"/>
    </reaction>
    <physiologicalReaction direction="left-to-right" evidence="6">
        <dbReference type="Rhea" id="RHEA:41224"/>
    </physiologicalReaction>
</comment>
<comment type="catalytic activity">
    <reaction evidence="1">
        <text>1,2-dihexadecanoyl-sn-glycero-3-phosphocholine + H2O = 2-hexadecanoyl-sn-glycero-3-phosphocholine + hexadecanoate + H(+)</text>
        <dbReference type="Rhea" id="RHEA:40487"/>
        <dbReference type="ChEBI" id="CHEBI:7896"/>
        <dbReference type="ChEBI" id="CHEBI:15377"/>
        <dbReference type="ChEBI" id="CHEBI:15378"/>
        <dbReference type="ChEBI" id="CHEBI:72999"/>
        <dbReference type="ChEBI" id="CHEBI:76078"/>
    </reaction>
    <physiologicalReaction direction="left-to-right" evidence="1">
        <dbReference type="Rhea" id="RHEA:40488"/>
    </physiologicalReaction>
</comment>
<comment type="catalytic activity">
    <reaction evidence="1">
        <text>1-hexadecanoyl-2-(9Z-octadecenoyl)-sn-glycero-3-phosphocholine + H2O = 2-(9Z-octadecenoyl)-sn-glycero-3-phosphocholine + hexadecanoate + H(+)</text>
        <dbReference type="Rhea" id="RHEA:38783"/>
        <dbReference type="ChEBI" id="CHEBI:7896"/>
        <dbReference type="ChEBI" id="CHEBI:15377"/>
        <dbReference type="ChEBI" id="CHEBI:15378"/>
        <dbReference type="ChEBI" id="CHEBI:73001"/>
        <dbReference type="ChEBI" id="CHEBI:76071"/>
    </reaction>
    <physiologicalReaction direction="left-to-right" evidence="1">
        <dbReference type="Rhea" id="RHEA:38784"/>
    </physiologicalReaction>
</comment>
<comment type="catalytic activity">
    <reaction evidence="1">
        <text>1-hexadecanoyl-2-(9Z-octadecenoyl)-sn-glycero-3-phosphocholine + H2O = 1-hexadecanoyl-sn-glycero-3-phosphocholine + (9Z)-octadecenoate + H(+)</text>
        <dbReference type="Rhea" id="RHEA:38779"/>
        <dbReference type="ChEBI" id="CHEBI:15377"/>
        <dbReference type="ChEBI" id="CHEBI:15378"/>
        <dbReference type="ChEBI" id="CHEBI:30823"/>
        <dbReference type="ChEBI" id="CHEBI:72998"/>
        <dbReference type="ChEBI" id="CHEBI:73001"/>
    </reaction>
    <physiologicalReaction direction="left-to-right" evidence="1">
        <dbReference type="Rhea" id="RHEA:38780"/>
    </physiologicalReaction>
</comment>
<comment type="catalytic activity">
    <reaction evidence="6">
        <text>1-hexadecanoyl-2-(5Z,8Z,11Z,14Z-eicosatetraenoyl)-sn-glycero-3-phosphocholine + H2O = 1-hexadecanoyl-sn-glycero-3-phosphocholine + (5Z,8Z,11Z,14Z)-eicosatetraenoate + H(+)</text>
        <dbReference type="Rhea" id="RHEA:40427"/>
        <dbReference type="ChEBI" id="CHEBI:15377"/>
        <dbReference type="ChEBI" id="CHEBI:15378"/>
        <dbReference type="ChEBI" id="CHEBI:32395"/>
        <dbReference type="ChEBI" id="CHEBI:72998"/>
        <dbReference type="ChEBI" id="CHEBI:73003"/>
    </reaction>
    <physiologicalReaction direction="left-to-right" evidence="6">
        <dbReference type="Rhea" id="RHEA:40428"/>
    </physiologicalReaction>
</comment>
<comment type="catalytic activity">
    <reaction evidence="1">
        <text>1-hexadecanoyl-2-(5Z,8Z,11Z,14Z-eicosatetraenoyl)-sn-glycero-3-phosphocholine + H2O = 2-(5Z,8Z,11Z,14Z)-eicosatetraenoyl-sn-glycero-3-phosphocholine + hexadecanoate + H(+)</text>
        <dbReference type="Rhea" id="RHEA:40571"/>
        <dbReference type="ChEBI" id="CHEBI:7896"/>
        <dbReference type="ChEBI" id="CHEBI:15377"/>
        <dbReference type="ChEBI" id="CHEBI:15378"/>
        <dbReference type="ChEBI" id="CHEBI:73003"/>
        <dbReference type="ChEBI" id="CHEBI:76079"/>
    </reaction>
    <physiologicalReaction direction="left-to-right" evidence="1">
        <dbReference type="Rhea" id="RHEA:40572"/>
    </physiologicalReaction>
</comment>
<comment type="catalytic activity">
    <reaction evidence="1">
        <text>1-hexadecanoyl-2-(9Z,12Z-octadecadienoyl)-sn-glycero-3-phosphoethanolamine + H2O = 1-hexadecanoyl-sn-glycero-3-phosphoethanolamine + (9Z,12Z)-octadecadienoate + H(+)</text>
        <dbReference type="Rhea" id="RHEA:40815"/>
        <dbReference type="ChEBI" id="CHEBI:15377"/>
        <dbReference type="ChEBI" id="CHEBI:15378"/>
        <dbReference type="ChEBI" id="CHEBI:30245"/>
        <dbReference type="ChEBI" id="CHEBI:73004"/>
        <dbReference type="ChEBI" id="CHEBI:73008"/>
    </reaction>
    <physiologicalReaction direction="left-to-right" evidence="1">
        <dbReference type="Rhea" id="RHEA:40816"/>
    </physiologicalReaction>
</comment>
<comment type="catalytic activity">
    <reaction evidence="1">
        <text>1-hexadecanoyl-2-(9Z,12Z-octadecadienoyl)-sn-glycero-3-phosphoethanolamine + H2O = 2-(9Z,12Z)-octadecadienoyl-sn-glycero-3-phosphoethanolamine + hexadecanoate + H(+)</text>
        <dbReference type="Rhea" id="RHEA:45164"/>
        <dbReference type="ChEBI" id="CHEBI:7896"/>
        <dbReference type="ChEBI" id="CHEBI:15377"/>
        <dbReference type="ChEBI" id="CHEBI:15378"/>
        <dbReference type="ChEBI" id="CHEBI:73008"/>
        <dbReference type="ChEBI" id="CHEBI:76090"/>
    </reaction>
    <physiologicalReaction direction="left-to-right" evidence="1">
        <dbReference type="Rhea" id="RHEA:45165"/>
    </physiologicalReaction>
</comment>
<comment type="catalytic activity">
    <reaction evidence="1">
        <text>1-hexadecanoyl-2-(5Z,8Z,11Z,14Z-eicosatetraenoyl)-sn-glycero-3-phosphoethanolamine + H2O = 1-hexadecanoyl-sn-glycero-3-phosphoethanolamine + (5Z,8Z,11Z,14Z)-eicosatetraenoate + H(+)</text>
        <dbReference type="Rhea" id="RHEA:40431"/>
        <dbReference type="ChEBI" id="CHEBI:15377"/>
        <dbReference type="ChEBI" id="CHEBI:15378"/>
        <dbReference type="ChEBI" id="CHEBI:32395"/>
        <dbReference type="ChEBI" id="CHEBI:73004"/>
        <dbReference type="ChEBI" id="CHEBI:73009"/>
    </reaction>
    <physiologicalReaction direction="left-to-right" evidence="1">
        <dbReference type="Rhea" id="RHEA:40432"/>
    </physiologicalReaction>
</comment>
<comment type="catalytic activity">
    <reaction evidence="1">
        <text>1-hexadecanoyl-2-(5Z,8Z,11Z,14Z-eicosatetraenoyl)-sn-glycero-3-phosphoethanolamine + H2O = 2-(5Z,8Z,11Z,14Z)-eicosatetraenoyl-sn-glycero-3-phosphoethanolamine + hexadecanoate + H(+)</text>
        <dbReference type="Rhea" id="RHEA:41348"/>
        <dbReference type="ChEBI" id="CHEBI:7896"/>
        <dbReference type="ChEBI" id="CHEBI:15377"/>
        <dbReference type="ChEBI" id="CHEBI:15378"/>
        <dbReference type="ChEBI" id="CHEBI:73009"/>
        <dbReference type="ChEBI" id="CHEBI:76091"/>
    </reaction>
    <physiologicalReaction direction="left-to-right" evidence="1">
        <dbReference type="Rhea" id="RHEA:41349"/>
    </physiologicalReaction>
</comment>
<comment type="catalytic activity">
    <reaction evidence="1">
        <text>1-hexanoyl-2-acyl-sn-glycero-3-phosphocholine + H2O = hexanoate + a 2-acyl-sn-glycero-3-phosphocholine + H(+)</text>
        <dbReference type="Rhea" id="RHEA:53496"/>
        <dbReference type="ChEBI" id="CHEBI:15377"/>
        <dbReference type="ChEBI" id="CHEBI:15378"/>
        <dbReference type="ChEBI" id="CHEBI:17120"/>
        <dbReference type="ChEBI" id="CHEBI:57875"/>
        <dbReference type="ChEBI" id="CHEBI:137403"/>
    </reaction>
    <physiologicalReaction direction="left-to-right" evidence="1">
        <dbReference type="Rhea" id="RHEA:53497"/>
    </physiologicalReaction>
</comment>
<comment type="catalytic activity">
    <reaction evidence="1">
        <text>1-hexanoyl-2-acyl-sn-glycero-3-phosphocholine + H2O = 1-hexanoyl-sn-glycero-3-phosphocholine + a fatty acid + H(+)</text>
        <dbReference type="Rhea" id="RHEA:53500"/>
        <dbReference type="ChEBI" id="CHEBI:15377"/>
        <dbReference type="ChEBI" id="CHEBI:15378"/>
        <dbReference type="ChEBI" id="CHEBI:28868"/>
        <dbReference type="ChEBI" id="CHEBI:78215"/>
        <dbReference type="ChEBI" id="CHEBI:137403"/>
    </reaction>
    <physiologicalReaction direction="left-to-right" evidence="1">
        <dbReference type="Rhea" id="RHEA:53501"/>
    </physiologicalReaction>
</comment>
<comment type="catalytic activity">
    <reaction evidence="1">
        <text>1,2-diheptadecanoyl-sn-glycero-3-phosphoethanolamine + 1-(9Z-octadecenoyl)-2-hexadecanoyl-sn-glycero-3-phosphocholine = 1,2-diheptadecanoyl-sn-glycero-3-phospho-N-hexadecanoyl-ethanolamine + 1-(9Z-octadecenoyl)-sn-glycero-3-phosphocholine + H(+)</text>
        <dbReference type="Rhea" id="RHEA:53524"/>
        <dbReference type="ChEBI" id="CHEBI:15378"/>
        <dbReference type="ChEBI" id="CHEBI:28610"/>
        <dbReference type="ChEBI" id="CHEBI:74667"/>
        <dbReference type="ChEBI" id="CHEBI:138218"/>
        <dbReference type="ChEBI" id="CHEBI:138220"/>
    </reaction>
    <physiologicalReaction direction="left-to-right" evidence="1">
        <dbReference type="Rhea" id="RHEA:53525"/>
    </physiologicalReaction>
</comment>
<comment type="catalytic activity">
    <reaction evidence="1">
        <text>1,2-diheptadecanoyl-sn-glycero-3-phosphoethanolamine + 1-(9Z-octadecenoyl)-2-hexadecanoyl-sn-glycero-3-phosphocholine = 1,2-diheptadecanoyl-sn-glycero-3-phospho-N-(9Z-octadecenoyl)-ethanolamine + 2-hexadecanoyl-sn-glycero-3-phosphocholine + H(+)</text>
        <dbReference type="Rhea" id="RHEA:53528"/>
        <dbReference type="ChEBI" id="CHEBI:15378"/>
        <dbReference type="ChEBI" id="CHEBI:74667"/>
        <dbReference type="ChEBI" id="CHEBI:76078"/>
        <dbReference type="ChEBI" id="CHEBI:138218"/>
        <dbReference type="ChEBI" id="CHEBI:138222"/>
    </reaction>
    <physiologicalReaction direction="left-to-right" evidence="1">
        <dbReference type="Rhea" id="RHEA:53529"/>
    </physiologicalReaction>
</comment>
<comment type="catalytic activity">
    <reaction evidence="1">
        <text>1,2-dihexanoyl-sn-glycero-3-phosphoethanolamine + 2-heptanoyl-sn-glycero-3-phosphocholine = hexanoyl-sn-glycero-3-phosphoethanolamine + 1-hexanoyl-2-heptanoyl-sn-glycero-3-phosphocholine</text>
        <dbReference type="Rhea" id="RHEA:54544"/>
        <dbReference type="ChEBI" id="CHEBI:138197"/>
        <dbReference type="ChEBI" id="CHEBI:138216"/>
        <dbReference type="ChEBI" id="CHEBI:138266"/>
        <dbReference type="ChEBI" id="CHEBI:138267"/>
    </reaction>
    <physiologicalReaction direction="left-to-right" evidence="1">
        <dbReference type="Rhea" id="RHEA:54545"/>
    </physiologicalReaction>
</comment>
<comment type="catalytic activity">
    <reaction evidence="1">
        <text>1-hexadecanoyl-2-octadecanoyl-sn-glycero-3-phosphocholine + H2O = octadecanoate + 1-hexadecanoyl-sn-glycero-3-phosphocholine + H(+)</text>
        <dbReference type="Rhea" id="RHEA:56432"/>
        <dbReference type="ChEBI" id="CHEBI:15377"/>
        <dbReference type="ChEBI" id="CHEBI:15378"/>
        <dbReference type="ChEBI" id="CHEBI:25629"/>
        <dbReference type="ChEBI" id="CHEBI:72998"/>
        <dbReference type="ChEBI" id="CHEBI:73000"/>
    </reaction>
    <physiologicalReaction direction="left-to-right" evidence="1">
        <dbReference type="Rhea" id="RHEA:56433"/>
    </physiologicalReaction>
</comment>
<comment type="catalytic activity">
    <reaction evidence="1">
        <text>1-hexadecanoyl-2-octadecanoyl-sn-glycero-3-phosphocholine + H2O = 2-octadecanoyl-sn-glycero-3-phosphocholine + hexadecanoate + H(+)</text>
        <dbReference type="Rhea" id="RHEA:56436"/>
        <dbReference type="ChEBI" id="CHEBI:7896"/>
        <dbReference type="ChEBI" id="CHEBI:15377"/>
        <dbReference type="ChEBI" id="CHEBI:15378"/>
        <dbReference type="ChEBI" id="CHEBI:73000"/>
        <dbReference type="ChEBI" id="CHEBI:76076"/>
    </reaction>
    <physiologicalReaction direction="left-to-right" evidence="1">
        <dbReference type="Rhea" id="RHEA:56437"/>
    </physiologicalReaction>
</comment>
<comment type="catalytic activity">
    <reaction evidence="1">
        <text>1-octadecanoyl-2-hexadecanoyl-sn-glycero-3-phosphocholine + H2O = 1-octadecanoyl-sn-glycero-3-phosphocholine + hexadecanoate + H(+)</text>
        <dbReference type="Rhea" id="RHEA:56440"/>
        <dbReference type="ChEBI" id="CHEBI:7896"/>
        <dbReference type="ChEBI" id="CHEBI:15377"/>
        <dbReference type="ChEBI" id="CHEBI:15378"/>
        <dbReference type="ChEBI" id="CHEBI:73858"/>
        <dbReference type="ChEBI" id="CHEBI:75026"/>
    </reaction>
    <physiologicalReaction direction="left-to-right" evidence="1">
        <dbReference type="Rhea" id="RHEA:56441"/>
    </physiologicalReaction>
</comment>
<comment type="catalytic activity">
    <reaction evidence="1">
        <text>1-octadecanoyl-2-hexadecanoyl-sn-glycero-3-phosphocholine + H2O = 2-hexadecanoyl-sn-glycero-3-phosphocholine + octadecanoate + H(+)</text>
        <dbReference type="Rhea" id="RHEA:56444"/>
        <dbReference type="ChEBI" id="CHEBI:15377"/>
        <dbReference type="ChEBI" id="CHEBI:15378"/>
        <dbReference type="ChEBI" id="CHEBI:25629"/>
        <dbReference type="ChEBI" id="CHEBI:75026"/>
        <dbReference type="ChEBI" id="CHEBI:76078"/>
    </reaction>
    <physiologicalReaction direction="left-to-right" evidence="1">
        <dbReference type="Rhea" id="RHEA:56445"/>
    </physiologicalReaction>
</comment>
<comment type="catalytic activity">
    <reaction evidence="6">
        <text>1-hexadecanoyl-2-(9Z,12Z-octadecadienoyl)-sn-glycero-3-phosphocholine + H2O = (9Z,12Z)-octadecadienoate + 1-hexadecanoyl-sn-glycero-3-phosphocholine + H(+)</text>
        <dbReference type="Rhea" id="RHEA:40811"/>
        <dbReference type="ChEBI" id="CHEBI:15377"/>
        <dbReference type="ChEBI" id="CHEBI:15378"/>
        <dbReference type="ChEBI" id="CHEBI:30245"/>
        <dbReference type="ChEBI" id="CHEBI:72998"/>
        <dbReference type="ChEBI" id="CHEBI:73002"/>
    </reaction>
    <physiologicalReaction direction="left-to-right" evidence="6">
        <dbReference type="Rhea" id="RHEA:40812"/>
    </physiologicalReaction>
</comment>
<comment type="catalytic activity">
    <reaction evidence="1">
        <text>1-hexadecanoyl-2-(9Z,12Z-octadecadienoyl)-sn-glycero-3-phosphocholine + H2O = 2-(9Z,12Z-octadecadienoyl)-sn-glycero-3-phosphocholine + hexadecanoate + H(+)</text>
        <dbReference type="Rhea" id="RHEA:40971"/>
        <dbReference type="ChEBI" id="CHEBI:7896"/>
        <dbReference type="ChEBI" id="CHEBI:15377"/>
        <dbReference type="ChEBI" id="CHEBI:15378"/>
        <dbReference type="ChEBI" id="CHEBI:73002"/>
        <dbReference type="ChEBI" id="CHEBI:76084"/>
    </reaction>
    <physiologicalReaction direction="left-to-right" evidence="1">
        <dbReference type="Rhea" id="RHEA:40972"/>
    </physiologicalReaction>
</comment>
<comment type="catalytic activity">
    <reaction evidence="1">
        <text>1,2-di-(9Z-octadecenoyl)-sn-glycero-3-phosphocholine + H2O = 2-(9Z-octadecenoyl)-sn-glycero-3-phosphocholine + (9Z)-octadecenoate + H(+)</text>
        <dbReference type="Rhea" id="RHEA:56448"/>
        <dbReference type="ChEBI" id="CHEBI:15377"/>
        <dbReference type="ChEBI" id="CHEBI:15378"/>
        <dbReference type="ChEBI" id="CHEBI:30823"/>
        <dbReference type="ChEBI" id="CHEBI:74669"/>
        <dbReference type="ChEBI" id="CHEBI:76071"/>
    </reaction>
    <physiologicalReaction direction="left-to-right" evidence="1">
        <dbReference type="Rhea" id="RHEA:56449"/>
    </physiologicalReaction>
</comment>
<comment type="catalytic activity">
    <reaction evidence="7">
        <text>1,2-dihexadecanoyl-sn-glycero-3-phosphocholine + H2O = hexadecanoyl-sn-glycero-3-phosphocholine + hexadecanoate + H(+)</text>
        <dbReference type="Rhea" id="RHEA:41384"/>
        <dbReference type="ChEBI" id="CHEBI:7896"/>
        <dbReference type="ChEBI" id="CHEBI:15377"/>
        <dbReference type="ChEBI" id="CHEBI:15378"/>
        <dbReference type="ChEBI" id="CHEBI:64563"/>
        <dbReference type="ChEBI" id="CHEBI:72999"/>
    </reaction>
    <physiologicalReaction direction="left-to-right" evidence="7">
        <dbReference type="Rhea" id="RHEA:41385"/>
    </physiologicalReaction>
</comment>
<comment type="catalytic activity">
    <reaction evidence="1">
        <text>1,2-di-(9Z-octadecenoyl)-sn-glycero-3-phosphocholine + H2O = 1-(9Z-octadecenoyl)-sn-glycero-3-phosphocholine + (9Z)-octadecenoate + H(+)</text>
        <dbReference type="Rhea" id="RHEA:40923"/>
        <dbReference type="ChEBI" id="CHEBI:15377"/>
        <dbReference type="ChEBI" id="CHEBI:15378"/>
        <dbReference type="ChEBI" id="CHEBI:28610"/>
        <dbReference type="ChEBI" id="CHEBI:30823"/>
        <dbReference type="ChEBI" id="CHEBI:74669"/>
    </reaction>
    <physiologicalReaction direction="left-to-right" evidence="1">
        <dbReference type="Rhea" id="RHEA:40924"/>
    </physiologicalReaction>
</comment>
<comment type="catalytic activity">
    <reaction evidence="2">
        <text>1,2-di-(9Z-octadecenoyl)-sn-glycero-3-phosphoethanolamine + 1,2-dihexadecanoyl-sn-glycero-3-phosphocholine = hexadecanoyl-sn-glycero-3-phosphocholine + N-hexadecanoyl-1,2-di-(9Z-octadecenoyl)-sn-glycero-3-phosphoethanolamine + H(+)</text>
        <dbReference type="Rhea" id="RHEA:41360"/>
        <dbReference type="ChEBI" id="CHEBI:15378"/>
        <dbReference type="ChEBI" id="CHEBI:64563"/>
        <dbReference type="ChEBI" id="CHEBI:72999"/>
        <dbReference type="ChEBI" id="CHEBI:74986"/>
        <dbReference type="ChEBI" id="CHEBI:78097"/>
    </reaction>
    <physiologicalReaction direction="left-to-right" evidence="2">
        <dbReference type="Rhea" id="RHEA:41361"/>
    </physiologicalReaction>
</comment>
<comment type="catalytic activity">
    <reaction evidence="6">
        <text>1,2-di-(9Z,12Z-octadecadienoyl)-sn-glycero-3-phosphocholine + H2O = 1-(9Z,12Z)-octadecadienoyl-sn-glycero-3-phosphocholine + (9Z,12Z)-octadecadienoate + H(+)</text>
        <dbReference type="Rhea" id="RHEA:56428"/>
        <dbReference type="ChEBI" id="CHEBI:15377"/>
        <dbReference type="ChEBI" id="CHEBI:15378"/>
        <dbReference type="ChEBI" id="CHEBI:28733"/>
        <dbReference type="ChEBI" id="CHEBI:30245"/>
        <dbReference type="ChEBI" id="CHEBI:42027"/>
    </reaction>
    <physiologicalReaction direction="left-to-right" evidence="6">
        <dbReference type="Rhea" id="RHEA:56429"/>
    </physiologicalReaction>
</comment>
<comment type="biophysicochemical properties">
    <kinetics>
        <KM evidence="6">16 uM for 1-palmitoyl-2-linoleoyl-phosphatidylcholine (PC)</KM>
        <Vmax evidence="6">7.8 umol/min/mg enzyme with 1-palmitoyl-2-linoleoyl-PC as substrate (in the presence of 2 mM calcium)</Vmax>
    </kinetics>
    <phDependence>
        <text evidence="6">Optimum pH is 8.0.</text>
    </phDependence>
</comment>
<comment type="subunit">
    <text evidence="1">Interacts with PPP2R1A; this interaction might decrease PP2A activity.</text>
</comment>
<comment type="subcellular location">
    <subcellularLocation>
        <location evidence="2">Cell membrane</location>
        <topology evidence="3">Single-pass membrane protein</topology>
    </subcellularLocation>
    <subcellularLocation>
        <location evidence="6 11">Cytoplasm</location>
    </subcellularLocation>
    <subcellularLocation>
        <location evidence="11">Cytoplasm</location>
        <location evidence="11">Cytosol</location>
    </subcellularLocation>
    <subcellularLocation>
        <location evidence="6">Cytoplasm</location>
        <location evidence="6">Perinuclear region</location>
    </subcellularLocation>
    <subcellularLocation>
        <location evidence="9">Peroxisome membrane</location>
        <topology evidence="15">Single-pass membrane protein</topology>
    </subcellularLocation>
    <subcellularLocation>
        <location evidence="11">Mitochondrion membrane</location>
        <topology evidence="15">Single-pass membrane protein</topology>
    </subcellularLocation>
    <subcellularLocation>
        <location evidence="11">Nucleus envelope</location>
    </subcellularLocation>
    <subcellularLocation>
        <location evidence="11">Lysosome membrane</location>
        <topology evidence="15">Single-pass membrane protein</topology>
    </subcellularLocation>
    <subcellularLocation>
        <location evidence="11">Endoplasmic reticulum membrane</location>
        <topology evidence="15">Single-pass membrane protein</topology>
    </subcellularLocation>
    <text evidence="11">During eye lens differentiation, recruited from the cytosol to various organelles, including mitochondria, endoplasmic reticulum, nuclear envelope and lysosomes, immediately before organelle degradation. This translocation is triggered by organelle membrane damage and requires the C-terminal transmembrane domain.</text>
</comment>
<comment type="alternative products">
    <event type="alternative splicing"/>
    <isoform>
        <id>Q8R3U1-1</id>
        <name>1</name>
        <sequence type="displayed"/>
    </isoform>
    <isoform>
        <id>Q8R3U1-2</id>
        <name>2</name>
        <sequence type="described" ref="VSP_013542"/>
    </isoform>
</comment>
<comment type="tissue specificity">
    <text evidence="5 6 8">Ubiquitously expressed in normal tissues but down-regulated in primary carcinomas or in many cell lines derived from tumors (PubMed:12055182). Highly expressed in white adipose tissue and in adipocytes (PubMed:18614531, PubMed:19136964). Expressed at lower levels in brown adipose tissue (PubMed:18614531, PubMed:19136964).</text>
</comment>
<comment type="domain">
    <text evidence="11">The C-terminal transmembrane domain is required for the targeting of the protein to damaged organelles.</text>
</comment>
<comment type="disruption phenotype">
    <text evidence="8 10 11 12">Mice display resistance to diet-induced obesity: they show strongly reduced adipose tissue mass and triglyceride content but normal adipogenesis accompanied by higher energy expenditure and increased fatty acid oxidation in adipocytes (PubMed:19136964). Mice show resistance to infection by picornaviruses, such as coxsackievirus A10, probably due to reduced viral genome release into the host cytoplasm (PubMed:28077878). The eye lens of knockout animals shows no growth defect, but the degradation of mitochondria, the endoplasmic reticulum and lysosomes is almost completely suppressed at postnatal day 0.5 and at 2 months and membranous organelles persisted at this time point (PubMed:33854238). Loss of the gene in white adipose tissue results in smaller adipocytes containing increased levels of the PI(18:0/20:4) membrane phospholipid and a defect in Pparg-dependent adipocyte differentiation with abnormal lipid droplet metabolism (PubMed:37919452).</text>
</comment>
<comment type="similarity">
    <text evidence="15">Belongs to the H-rev107 family.</text>
</comment>
<comment type="online information" name="Protein Spotlight">
    <link uri="https://www.proteinspotlight.org/back_issues/241/"/>
    <text>The makings of transparency - Issue 241 of November 2021</text>
</comment>
<proteinExistence type="evidence at protein level"/>